<dbReference type="EC" id="2.3.2.27" evidence="14"/>
<dbReference type="EMBL" id="AB039902">
    <property type="protein sequence ID" value="BAB17049.1"/>
    <property type="molecule type" value="mRNA"/>
</dbReference>
<dbReference type="EMBL" id="AB039903">
    <property type="protein sequence ID" value="BAB17050.1"/>
    <property type="status" value="ALT_SEQ"/>
    <property type="molecule type" value="mRNA"/>
</dbReference>
<dbReference type="EMBL" id="AB039904">
    <property type="protein sequence ID" value="BAB17051.1"/>
    <property type="molecule type" value="mRNA"/>
</dbReference>
<dbReference type="EMBL" id="AF220143">
    <property type="protein sequence ID" value="AAG53516.1"/>
    <property type="molecule type" value="mRNA"/>
</dbReference>
<dbReference type="EMBL" id="AF220144">
    <property type="protein sequence ID" value="AAG53517.1"/>
    <property type="status" value="ALT_INIT"/>
    <property type="molecule type" value="mRNA"/>
</dbReference>
<dbReference type="EMBL" id="AK027876">
    <property type="protein sequence ID" value="BAB55424.1"/>
    <property type="molecule type" value="mRNA"/>
</dbReference>
<dbReference type="EMBL" id="CH471064">
    <property type="protein sequence ID" value="EAW68778.1"/>
    <property type="molecule type" value="Genomic_DNA"/>
</dbReference>
<dbReference type="EMBL" id="CH471064">
    <property type="protein sequence ID" value="EAW68780.1"/>
    <property type="molecule type" value="Genomic_DNA"/>
</dbReference>
<dbReference type="EMBL" id="AL583914">
    <property type="protein sequence ID" value="CAC29498.1"/>
    <property type="molecule type" value="mRNA"/>
</dbReference>
<dbReference type="CCDS" id="CCDS31391.1">
    <molecule id="Q9BYJ4-1"/>
</dbReference>
<dbReference type="RefSeq" id="NP_001003827.1">
    <molecule id="Q9BYJ4-1"/>
    <property type="nucleotide sequence ID" value="NM_001003827.1"/>
</dbReference>
<dbReference type="RefSeq" id="NP_067629.2">
    <molecule id="Q9BYJ4-1"/>
    <property type="nucleotide sequence ID" value="NM_021616.5"/>
</dbReference>
<dbReference type="RefSeq" id="NP_569074.2">
    <property type="nucleotide sequence ID" value="NM_130390.2"/>
</dbReference>
<dbReference type="PDB" id="2EGP">
    <property type="method" value="NMR"/>
    <property type="chains" value="A=8-79"/>
</dbReference>
<dbReference type="PDBsum" id="2EGP"/>
<dbReference type="SMR" id="Q9BYJ4"/>
<dbReference type="BioGRID" id="119809">
    <property type="interactions" value="22"/>
</dbReference>
<dbReference type="FunCoup" id="Q9BYJ4">
    <property type="interactions" value="369"/>
</dbReference>
<dbReference type="IntAct" id="Q9BYJ4">
    <property type="interactions" value="9"/>
</dbReference>
<dbReference type="STRING" id="9606.ENSP00000346916"/>
<dbReference type="iPTMnet" id="Q9BYJ4"/>
<dbReference type="PhosphoSitePlus" id="Q9BYJ4"/>
<dbReference type="BioMuta" id="TRIM34"/>
<dbReference type="DMDM" id="55976584"/>
<dbReference type="jPOST" id="Q9BYJ4"/>
<dbReference type="MassIVE" id="Q9BYJ4"/>
<dbReference type="PaxDb" id="9606-ENSP00000346916"/>
<dbReference type="PeptideAtlas" id="Q9BYJ4"/>
<dbReference type="ProteomicsDB" id="79657">
    <molecule id="Q9BYJ4-1"/>
</dbReference>
<dbReference type="ProteomicsDB" id="79658">
    <molecule id="Q9BYJ4-2"/>
</dbReference>
<dbReference type="Antibodypedia" id="57793">
    <property type="antibodies" value="139 antibodies from 20 providers"/>
</dbReference>
<dbReference type="DNASU" id="53840"/>
<dbReference type="Ensembl" id="ENST00000429814.3">
    <molecule id="Q9BYJ4-1"/>
    <property type="protein sequence ID" value="ENSP00000402595.2"/>
    <property type="gene ID" value="ENSG00000258659.7"/>
</dbReference>
<dbReference type="Ensembl" id="ENST00000514226.5">
    <molecule id="Q9BYJ4-1"/>
    <property type="protein sequence ID" value="ENSP00000422947.1"/>
    <property type="gene ID" value="ENSG00000258659.7"/>
</dbReference>
<dbReference type="GeneID" id="53840"/>
<dbReference type="KEGG" id="hsa:53840"/>
<dbReference type="MANE-Select" id="ENST00000429814.3">
    <property type="protein sequence ID" value="ENSP00000402595.2"/>
    <property type="RefSeq nucleotide sequence ID" value="NM_021616.6"/>
    <property type="RefSeq protein sequence ID" value="NP_067629.2"/>
</dbReference>
<dbReference type="UCSC" id="uc001mbh.4">
    <molecule id="Q9BYJ4-1"/>
    <property type="organism name" value="human"/>
</dbReference>
<dbReference type="AGR" id="HGNC:10063"/>
<dbReference type="CTD" id="53840"/>
<dbReference type="DisGeNET" id="53840"/>
<dbReference type="GeneCards" id="TRIM34"/>
<dbReference type="HGNC" id="HGNC:10063">
    <property type="gene designation" value="TRIM34"/>
</dbReference>
<dbReference type="HPA" id="ENSG00000258659">
    <property type="expression patterns" value="Low tissue specificity"/>
</dbReference>
<dbReference type="MalaCards" id="TRIM34"/>
<dbReference type="MIM" id="605684">
    <property type="type" value="gene"/>
</dbReference>
<dbReference type="neXtProt" id="NX_Q9BYJ4"/>
<dbReference type="OpenTargets" id="ENSG00000258659"/>
<dbReference type="PharmGKB" id="PA35533"/>
<dbReference type="VEuPathDB" id="HostDB:ENSG00000258659"/>
<dbReference type="eggNOG" id="KOG2177">
    <property type="taxonomic scope" value="Eukaryota"/>
</dbReference>
<dbReference type="GeneTree" id="ENSGT00940000162320"/>
<dbReference type="HOGENOM" id="CLU_013137_0_3_1"/>
<dbReference type="InParanoid" id="Q9BYJ4"/>
<dbReference type="OMA" id="HEIWGLQ"/>
<dbReference type="OrthoDB" id="264917at2759"/>
<dbReference type="PAN-GO" id="Q9BYJ4">
    <property type="GO annotations" value="13 GO annotations based on evolutionary models"/>
</dbReference>
<dbReference type="PhylomeDB" id="Q9BYJ4"/>
<dbReference type="PathwayCommons" id="Q9BYJ4"/>
<dbReference type="Reactome" id="R-HSA-877300">
    <property type="pathway name" value="Interferon gamma signaling"/>
</dbReference>
<dbReference type="SignaLink" id="Q9BYJ4"/>
<dbReference type="SIGNOR" id="Q9BYJ4"/>
<dbReference type="UniPathway" id="UPA00143"/>
<dbReference type="BioGRID-ORCS" id="53840">
    <property type="hits" value="10 hits in 1114 CRISPR screens"/>
</dbReference>
<dbReference type="EvolutionaryTrace" id="Q9BYJ4"/>
<dbReference type="GenomeRNAi" id="53840"/>
<dbReference type="Pharos" id="Q9BYJ4">
    <property type="development level" value="Tbio"/>
</dbReference>
<dbReference type="PRO" id="PR:Q9BYJ4"/>
<dbReference type="Proteomes" id="UP000005640">
    <property type="component" value="Chromosome 11"/>
</dbReference>
<dbReference type="RNAct" id="Q9BYJ4">
    <property type="molecule type" value="protein"/>
</dbReference>
<dbReference type="Bgee" id="ENSG00000258659">
    <property type="expression patterns" value="Expressed in monocyte and 102 other cell types or tissues"/>
</dbReference>
<dbReference type="GO" id="GO:0005737">
    <property type="term" value="C:cytoplasm"/>
    <property type="evidence" value="ECO:0000314"/>
    <property type="project" value="UniProtKB"/>
</dbReference>
<dbReference type="GO" id="GO:0005829">
    <property type="term" value="C:cytosol"/>
    <property type="evidence" value="ECO:0000304"/>
    <property type="project" value="Reactome"/>
</dbReference>
<dbReference type="GO" id="GO:0005739">
    <property type="term" value="C:mitochondrion"/>
    <property type="evidence" value="ECO:0007669"/>
    <property type="project" value="UniProtKB-SubCell"/>
</dbReference>
<dbReference type="GO" id="GO:0042802">
    <property type="term" value="F:identical protein binding"/>
    <property type="evidence" value="ECO:0000353"/>
    <property type="project" value="UniProtKB"/>
</dbReference>
<dbReference type="GO" id="GO:0061630">
    <property type="term" value="F:ubiquitin protein ligase activity"/>
    <property type="evidence" value="ECO:0000318"/>
    <property type="project" value="GO_Central"/>
</dbReference>
<dbReference type="GO" id="GO:0008270">
    <property type="term" value="F:zinc ion binding"/>
    <property type="evidence" value="ECO:0007669"/>
    <property type="project" value="UniProtKB-KW"/>
</dbReference>
<dbReference type="GO" id="GO:0051607">
    <property type="term" value="P:defense response to virus"/>
    <property type="evidence" value="ECO:0007669"/>
    <property type="project" value="UniProtKB-KW"/>
</dbReference>
<dbReference type="GO" id="GO:0045087">
    <property type="term" value="P:innate immune response"/>
    <property type="evidence" value="ECO:0000318"/>
    <property type="project" value="GO_Central"/>
</dbReference>
<dbReference type="GO" id="GO:0051091">
    <property type="term" value="P:positive regulation of DNA-binding transcription factor activity"/>
    <property type="evidence" value="ECO:0000314"/>
    <property type="project" value="UniProtKB"/>
</dbReference>
<dbReference type="GO" id="GO:0016567">
    <property type="term" value="P:protein ubiquitination"/>
    <property type="evidence" value="ECO:0007669"/>
    <property type="project" value="UniProtKB-UniPathway"/>
</dbReference>
<dbReference type="GO" id="GO:0010468">
    <property type="term" value="P:regulation of gene expression"/>
    <property type="evidence" value="ECO:0000318"/>
    <property type="project" value="GO_Central"/>
</dbReference>
<dbReference type="CDD" id="cd19761">
    <property type="entry name" value="Bbox2_TRIM5-like"/>
    <property type="match status" value="1"/>
</dbReference>
<dbReference type="CDD" id="cd16591">
    <property type="entry name" value="RING-HC_TRIM5-like_C-IV"/>
    <property type="match status" value="1"/>
</dbReference>
<dbReference type="CDD" id="cd15825">
    <property type="entry name" value="SPRY_PRY_TRIM34"/>
    <property type="match status" value="1"/>
</dbReference>
<dbReference type="FunFam" id="2.60.120.920:FF:000023">
    <property type="entry name" value="Tripartite motif-containing 5 (Predicted)"/>
    <property type="match status" value="1"/>
</dbReference>
<dbReference type="FunFam" id="3.30.160.60:FF:000386">
    <property type="entry name" value="Tripartite motif-containing 5 (Predicted)"/>
    <property type="match status" value="1"/>
</dbReference>
<dbReference type="FunFam" id="3.30.40.10:FF:000144">
    <property type="entry name" value="Tripartite motif-containing 5 (Predicted)"/>
    <property type="match status" value="1"/>
</dbReference>
<dbReference type="Gene3D" id="2.60.120.920">
    <property type="match status" value="1"/>
</dbReference>
<dbReference type="Gene3D" id="3.30.160.60">
    <property type="entry name" value="Classic Zinc Finger"/>
    <property type="match status" value="1"/>
</dbReference>
<dbReference type="Gene3D" id="3.30.40.10">
    <property type="entry name" value="Zinc/RING finger domain, C3HC4 (zinc finger)"/>
    <property type="match status" value="1"/>
</dbReference>
<dbReference type="InterPro" id="IPR001870">
    <property type="entry name" value="B30.2/SPRY"/>
</dbReference>
<dbReference type="InterPro" id="IPR043136">
    <property type="entry name" value="B30.2/SPRY_sf"/>
</dbReference>
<dbReference type="InterPro" id="IPR003879">
    <property type="entry name" value="Butyrophylin_SPRY"/>
</dbReference>
<dbReference type="InterPro" id="IPR013320">
    <property type="entry name" value="ConA-like_dom_sf"/>
</dbReference>
<dbReference type="InterPro" id="IPR003877">
    <property type="entry name" value="SPRY_dom"/>
</dbReference>
<dbReference type="InterPro" id="IPR050143">
    <property type="entry name" value="TRIM/RBCC"/>
</dbReference>
<dbReference type="InterPro" id="IPR035826">
    <property type="entry name" value="TRIM34_PRY/SPRY"/>
</dbReference>
<dbReference type="InterPro" id="IPR000315">
    <property type="entry name" value="Znf_B-box"/>
</dbReference>
<dbReference type="InterPro" id="IPR001841">
    <property type="entry name" value="Znf_RING"/>
</dbReference>
<dbReference type="InterPro" id="IPR013083">
    <property type="entry name" value="Znf_RING/FYVE/PHD"/>
</dbReference>
<dbReference type="InterPro" id="IPR017907">
    <property type="entry name" value="Znf_RING_CS"/>
</dbReference>
<dbReference type="PANTHER" id="PTHR24103">
    <property type="entry name" value="E3 UBIQUITIN-PROTEIN LIGASE TRIM"/>
    <property type="match status" value="1"/>
</dbReference>
<dbReference type="Pfam" id="PF00622">
    <property type="entry name" value="SPRY"/>
    <property type="match status" value="1"/>
</dbReference>
<dbReference type="Pfam" id="PF00643">
    <property type="entry name" value="zf-B_box"/>
    <property type="match status" value="1"/>
</dbReference>
<dbReference type="Pfam" id="PF15227">
    <property type="entry name" value="zf-C3HC4_4"/>
    <property type="match status" value="1"/>
</dbReference>
<dbReference type="PRINTS" id="PR01407">
    <property type="entry name" value="BUTYPHLNCDUF"/>
</dbReference>
<dbReference type="SMART" id="SM00336">
    <property type="entry name" value="BBOX"/>
    <property type="match status" value="1"/>
</dbReference>
<dbReference type="SMART" id="SM00184">
    <property type="entry name" value="RING"/>
    <property type="match status" value="1"/>
</dbReference>
<dbReference type="SMART" id="SM00449">
    <property type="entry name" value="SPRY"/>
    <property type="match status" value="1"/>
</dbReference>
<dbReference type="SUPFAM" id="SSF57845">
    <property type="entry name" value="B-box zinc-binding domain"/>
    <property type="match status" value="1"/>
</dbReference>
<dbReference type="SUPFAM" id="SSF49899">
    <property type="entry name" value="Concanavalin A-like lectins/glucanases"/>
    <property type="match status" value="1"/>
</dbReference>
<dbReference type="SUPFAM" id="SSF57850">
    <property type="entry name" value="RING/U-box"/>
    <property type="match status" value="1"/>
</dbReference>
<dbReference type="PROSITE" id="PS50188">
    <property type="entry name" value="B302_SPRY"/>
    <property type="match status" value="1"/>
</dbReference>
<dbReference type="PROSITE" id="PS50119">
    <property type="entry name" value="ZF_BBOX"/>
    <property type="match status" value="1"/>
</dbReference>
<dbReference type="PROSITE" id="PS00518">
    <property type="entry name" value="ZF_RING_1"/>
    <property type="match status" value="1"/>
</dbReference>
<dbReference type="PROSITE" id="PS50089">
    <property type="entry name" value="ZF_RING_2"/>
    <property type="match status" value="1"/>
</dbReference>
<protein>
    <recommendedName>
        <fullName>E3 ubiquitin-protein ligase TRIM34</fullName>
        <ecNumber evidence="14">2.3.2.27</ecNumber>
    </recommendedName>
    <alternativeName>
        <fullName>Interferon-responsive finger protein 1</fullName>
    </alternativeName>
    <alternativeName>
        <fullName>RING finger protein 21</fullName>
    </alternativeName>
</protein>
<reference key="1">
    <citation type="journal article" date="2000" name="Genomics">
        <title>Molecular cloning of ring finger protein 21 (RNF21)/interferon-responsive finger protein (ifp1), which possesses two RING-B box-coiled coil domains in tandem.</title>
        <authorList>
            <person name="Orimo A."/>
            <person name="Tominaga N."/>
            <person name="Yoshimura K."/>
            <person name="Yamauchi Y."/>
            <person name="Nomura M."/>
            <person name="Sato M."/>
            <person name="Nogi Y."/>
            <person name="Suzuki M."/>
            <person name="Suzuki H."/>
            <person name="Ikeda K."/>
            <person name="Inoue S."/>
            <person name="Muramatsu M."/>
        </authorList>
    </citation>
    <scope>NUCLEOTIDE SEQUENCE [MRNA] (ISOFORMS 1 AND 2)</scope>
    <scope>ALTERNATIVE SPLICING</scope>
    <scope>INDUCTION</scope>
    <scope>TISSUE SPECIFICITY</scope>
</reference>
<reference key="2">
    <citation type="journal article" date="2001" name="EMBO J.">
        <title>The tripartite motif family identifies cell compartments.</title>
        <authorList>
            <person name="Reymond A."/>
            <person name="Meroni G."/>
            <person name="Fantozzi A."/>
            <person name="Merla G."/>
            <person name="Cairo S."/>
            <person name="Luzi L."/>
            <person name="Riganelli D."/>
            <person name="Zanaria E."/>
            <person name="Messali S."/>
            <person name="Cainarca S."/>
            <person name="Guffanti A."/>
            <person name="Minucci S."/>
            <person name="Pelicci P.G."/>
            <person name="Ballabio A."/>
        </authorList>
    </citation>
    <scope>NUCLEOTIDE SEQUENCE [MRNA] (ISOFORM 1)</scope>
</reference>
<reference key="3">
    <citation type="journal article" date="2004" name="Nat. Genet.">
        <title>Complete sequencing and characterization of 21,243 full-length human cDNAs.</title>
        <authorList>
            <person name="Ota T."/>
            <person name="Suzuki Y."/>
            <person name="Nishikawa T."/>
            <person name="Otsuki T."/>
            <person name="Sugiyama T."/>
            <person name="Irie R."/>
            <person name="Wakamatsu A."/>
            <person name="Hayashi K."/>
            <person name="Sato H."/>
            <person name="Nagai K."/>
            <person name="Kimura K."/>
            <person name="Makita H."/>
            <person name="Sekine M."/>
            <person name="Obayashi M."/>
            <person name="Nishi T."/>
            <person name="Shibahara T."/>
            <person name="Tanaka T."/>
            <person name="Ishii S."/>
            <person name="Yamamoto J."/>
            <person name="Saito K."/>
            <person name="Kawai Y."/>
            <person name="Isono Y."/>
            <person name="Nakamura Y."/>
            <person name="Nagahari K."/>
            <person name="Murakami K."/>
            <person name="Yasuda T."/>
            <person name="Iwayanagi T."/>
            <person name="Wagatsuma M."/>
            <person name="Shiratori A."/>
            <person name="Sudo H."/>
            <person name="Hosoiri T."/>
            <person name="Kaku Y."/>
            <person name="Kodaira H."/>
            <person name="Kondo H."/>
            <person name="Sugawara M."/>
            <person name="Takahashi M."/>
            <person name="Kanda K."/>
            <person name="Yokoi T."/>
            <person name="Furuya T."/>
            <person name="Kikkawa E."/>
            <person name="Omura Y."/>
            <person name="Abe K."/>
            <person name="Kamihara K."/>
            <person name="Katsuta N."/>
            <person name="Sato K."/>
            <person name="Tanikawa M."/>
            <person name="Yamazaki M."/>
            <person name="Ninomiya K."/>
            <person name="Ishibashi T."/>
            <person name="Yamashita H."/>
            <person name="Murakawa K."/>
            <person name="Fujimori K."/>
            <person name="Tanai H."/>
            <person name="Kimata M."/>
            <person name="Watanabe M."/>
            <person name="Hiraoka S."/>
            <person name="Chiba Y."/>
            <person name="Ishida S."/>
            <person name="Ono Y."/>
            <person name="Takiguchi S."/>
            <person name="Watanabe S."/>
            <person name="Yosida M."/>
            <person name="Hotuta T."/>
            <person name="Kusano J."/>
            <person name="Kanehori K."/>
            <person name="Takahashi-Fujii A."/>
            <person name="Hara H."/>
            <person name="Tanase T.-O."/>
            <person name="Nomura Y."/>
            <person name="Togiya S."/>
            <person name="Komai F."/>
            <person name="Hara R."/>
            <person name="Takeuchi K."/>
            <person name="Arita M."/>
            <person name="Imose N."/>
            <person name="Musashino K."/>
            <person name="Yuuki H."/>
            <person name="Oshima A."/>
            <person name="Sasaki N."/>
            <person name="Aotsuka S."/>
            <person name="Yoshikawa Y."/>
            <person name="Matsunawa H."/>
            <person name="Ichihara T."/>
            <person name="Shiohata N."/>
            <person name="Sano S."/>
            <person name="Moriya S."/>
            <person name="Momiyama H."/>
            <person name="Satoh N."/>
            <person name="Takami S."/>
            <person name="Terashima Y."/>
            <person name="Suzuki O."/>
            <person name="Nakagawa S."/>
            <person name="Senoh A."/>
            <person name="Mizoguchi H."/>
            <person name="Goto Y."/>
            <person name="Shimizu F."/>
            <person name="Wakebe H."/>
            <person name="Hishigaki H."/>
            <person name="Watanabe T."/>
            <person name="Sugiyama A."/>
            <person name="Takemoto M."/>
            <person name="Kawakami B."/>
            <person name="Yamazaki M."/>
            <person name="Watanabe K."/>
            <person name="Kumagai A."/>
            <person name="Itakura S."/>
            <person name="Fukuzumi Y."/>
            <person name="Fujimori Y."/>
            <person name="Komiyama M."/>
            <person name="Tashiro H."/>
            <person name="Tanigami A."/>
            <person name="Fujiwara T."/>
            <person name="Ono T."/>
            <person name="Yamada K."/>
            <person name="Fujii Y."/>
            <person name="Ozaki K."/>
            <person name="Hirao M."/>
            <person name="Ohmori Y."/>
            <person name="Kawabata A."/>
            <person name="Hikiji T."/>
            <person name="Kobatake N."/>
            <person name="Inagaki H."/>
            <person name="Ikema Y."/>
            <person name="Okamoto S."/>
            <person name="Okitani R."/>
            <person name="Kawakami T."/>
            <person name="Noguchi S."/>
            <person name="Itoh T."/>
            <person name="Shigeta K."/>
            <person name="Senba T."/>
            <person name="Matsumura K."/>
            <person name="Nakajima Y."/>
            <person name="Mizuno T."/>
            <person name="Morinaga M."/>
            <person name="Sasaki M."/>
            <person name="Togashi T."/>
            <person name="Oyama M."/>
            <person name="Hata H."/>
            <person name="Watanabe M."/>
            <person name="Komatsu T."/>
            <person name="Mizushima-Sugano J."/>
            <person name="Satoh T."/>
            <person name="Shirai Y."/>
            <person name="Takahashi Y."/>
            <person name="Nakagawa K."/>
            <person name="Okumura K."/>
            <person name="Nagase T."/>
            <person name="Nomura N."/>
            <person name="Kikuchi H."/>
            <person name="Masuho Y."/>
            <person name="Yamashita R."/>
            <person name="Nakai K."/>
            <person name="Yada T."/>
            <person name="Nakamura Y."/>
            <person name="Ohara O."/>
            <person name="Isogai T."/>
            <person name="Sugano S."/>
        </authorList>
    </citation>
    <scope>NUCLEOTIDE SEQUENCE [LARGE SCALE MRNA] (ISOFORM 1)</scope>
    <source>
        <tissue>Thyroid</tissue>
    </source>
</reference>
<reference key="4">
    <citation type="submission" date="2005-09" db="EMBL/GenBank/DDBJ databases">
        <authorList>
            <person name="Mural R.J."/>
            <person name="Istrail S."/>
            <person name="Sutton G.G."/>
            <person name="Florea L."/>
            <person name="Halpern A.L."/>
            <person name="Mobarry C.M."/>
            <person name="Lippert R."/>
            <person name="Walenz B."/>
            <person name="Shatkay H."/>
            <person name="Dew I."/>
            <person name="Miller J.R."/>
            <person name="Flanigan M.J."/>
            <person name="Edwards N.J."/>
            <person name="Bolanos R."/>
            <person name="Fasulo D."/>
            <person name="Halldorsson B.V."/>
            <person name="Hannenhalli S."/>
            <person name="Turner R."/>
            <person name="Yooseph S."/>
            <person name="Lu F."/>
            <person name="Nusskern D.R."/>
            <person name="Shue B.C."/>
            <person name="Zheng X.H."/>
            <person name="Zhong F."/>
            <person name="Delcher A.L."/>
            <person name="Huson D.H."/>
            <person name="Kravitz S.A."/>
            <person name="Mouchard L."/>
            <person name="Reinert K."/>
            <person name="Remington K.A."/>
            <person name="Clark A.G."/>
            <person name="Waterman M.S."/>
            <person name="Eichler E.E."/>
            <person name="Adams M.D."/>
            <person name="Hunkapiller M.W."/>
            <person name="Myers E.W."/>
            <person name="Venter J.C."/>
        </authorList>
    </citation>
    <scope>NUCLEOTIDE SEQUENCE [LARGE SCALE GENOMIC DNA]</scope>
</reference>
<reference key="5">
    <citation type="journal article" date="2007" name="BMC Genomics">
        <title>The full-ORF clone resource of the German cDNA consortium.</title>
        <authorList>
            <person name="Bechtel S."/>
            <person name="Rosenfelder H."/>
            <person name="Duda A."/>
            <person name="Schmidt C.P."/>
            <person name="Ernst U."/>
            <person name="Wellenreuther R."/>
            <person name="Mehrle A."/>
            <person name="Schuster C."/>
            <person name="Bahr A."/>
            <person name="Bloecker H."/>
            <person name="Heubner D."/>
            <person name="Hoerlein A."/>
            <person name="Michel G."/>
            <person name="Wedler H."/>
            <person name="Koehrer K."/>
            <person name="Ottenwaelder B."/>
            <person name="Poustka A."/>
            <person name="Wiemann S."/>
            <person name="Schupp I."/>
        </authorList>
    </citation>
    <scope>NUCLEOTIDE SEQUENCE [LARGE SCALE MRNA] OF 79-488 (ISOFORM 1)</scope>
    <source>
        <tissue>Lymph node</tissue>
    </source>
</reference>
<reference key="6">
    <citation type="journal article" date="2007" name="Virology">
        <title>Unique features of TRIM5alpha among closely related human TRIM family members.</title>
        <authorList>
            <person name="Li X."/>
            <person name="Gold B."/>
            <person name="O'hUigin C."/>
            <person name="Diaz-Griffero F."/>
            <person name="Song B."/>
            <person name="Si Z."/>
            <person name="Li Y."/>
            <person name="Yuan W."/>
            <person name="Stremlau M."/>
            <person name="Mische C."/>
            <person name="Javanbakht H."/>
            <person name="Scally M."/>
            <person name="Winkler C."/>
            <person name="Dean M."/>
            <person name="Sodroski J."/>
        </authorList>
    </citation>
    <scope>FUNCTION</scope>
    <scope>INTERACTION WITH TRIM5</scope>
    <scope>INTERACTION WITH HIV-1 CAPSID PROTEIN (MICROBIAL INFECTION)</scope>
    <scope>SUBUNIT</scope>
    <scope>SUBCELLULAR LOCATION</scope>
</reference>
<reference key="7">
    <citation type="journal article" date="2011" name="J. Biol. Chem.">
        <title>Determinants of the higher order association of the restriction factor TRIM5alpha and other tripartite motif (TRIM) proteins.</title>
        <authorList>
            <person name="Li X."/>
            <person name="Yeung D.F."/>
            <person name="Fiegen A.M."/>
            <person name="Sodroski J."/>
        </authorList>
    </citation>
    <scope>INTERACTION WITH TRIM5</scope>
    <scope>MUTAGENESIS OF ARG-121</scope>
</reference>
<reference key="8">
    <citation type="journal article" date="2019" name="Exp. Cell Res.">
        <title>TRIM34 facilitates the formation of multinucleated giant cells by enhancing cell fusion and phagocytosis in epithelial cells.</title>
        <authorList>
            <person name="Sun D."/>
            <person name="An X."/>
            <person name="Ji B."/>
        </authorList>
    </citation>
    <scope>FUNCTION</scope>
    <scope>SUBCELLULAR LOCATION</scope>
</reference>
<reference key="9">
    <citation type="journal article" date="2020" name="PLoS Pathog.">
        <title>TRIM34 restricts HIV-1 and SIV capsids in a TRIM5alpha-dependent manner.</title>
        <authorList>
            <person name="Ohainle M."/>
            <person name="Kim K."/>
            <person name="Komurlu Keceli S."/>
            <person name="Felton A."/>
            <person name="Campbell E."/>
            <person name="Luban J."/>
            <person name="Emerman M."/>
        </authorList>
    </citation>
    <scope>FUNCTION</scope>
    <scope>SUBCELLULAR LOCATION</scope>
</reference>
<reference key="10">
    <citation type="journal article" date="2020" name="Heliyon">
        <title>TRIM34 localizes to the mitochondria and mediates apoptosis through the mitochondrial pathway in HEK293T cells.</title>
        <authorList>
            <person name="An X."/>
            <person name="Ji B."/>
            <person name="Sun D."/>
        </authorList>
    </citation>
    <scope>FUNCTION</scope>
    <scope>SUBCELLULAR LOCATION</scope>
</reference>
<reference key="11">
    <citation type="journal article" date="2022" name="J. Biol. Chem.">
        <title>TRIM34 modulates influenza virus-activated programmed cell death by targeting Z-DNA-binding protein 1 for K63-linked polyubiquitination.</title>
        <authorList>
            <person name="Wang X."/>
            <person name="Xiong J."/>
            <person name="Zhou D."/>
            <person name="Zhang S."/>
            <person name="Wang L."/>
            <person name="Tian Q."/>
            <person name="Li C."/>
            <person name="Liu J."/>
            <person name="Wu Y."/>
            <person name="Li J."/>
            <person name="Wang J."/>
        </authorList>
    </citation>
    <scope>FUNCTION</scope>
    <scope>CATALYTIC ACTIVITY</scope>
</reference>
<reference key="12">
    <citation type="submission" date="2007-09" db="PDB data bank">
        <title>Solution structure of the RING-finger domain from human tripartite motif protein 34.</title>
        <authorList>
            <consortium name="RIKEN structural genomics initiative (RSGI)"/>
        </authorList>
    </citation>
    <scope>STRUCTURE BY NMR OF 8-79</scope>
</reference>
<proteinExistence type="evidence at protein level"/>
<organism>
    <name type="scientific">Homo sapiens</name>
    <name type="common">Human</name>
    <dbReference type="NCBI Taxonomy" id="9606"/>
    <lineage>
        <taxon>Eukaryota</taxon>
        <taxon>Metazoa</taxon>
        <taxon>Chordata</taxon>
        <taxon>Craniata</taxon>
        <taxon>Vertebrata</taxon>
        <taxon>Euteleostomi</taxon>
        <taxon>Mammalia</taxon>
        <taxon>Eutheria</taxon>
        <taxon>Euarchontoglires</taxon>
        <taxon>Primates</taxon>
        <taxon>Haplorrhini</taxon>
        <taxon>Catarrhini</taxon>
        <taxon>Hominidae</taxon>
        <taxon>Homo</taxon>
    </lineage>
</organism>
<keyword id="KW-0002">3D-structure</keyword>
<keyword id="KW-0025">Alternative splicing</keyword>
<keyword id="KW-0051">Antiviral defense</keyword>
<keyword id="KW-0175">Coiled coil</keyword>
<keyword id="KW-0963">Cytoplasm</keyword>
<keyword id="KW-0479">Metal-binding</keyword>
<keyword id="KW-0496">Mitochondrion</keyword>
<keyword id="KW-1267">Proteomics identification</keyword>
<keyword id="KW-1185">Reference proteome</keyword>
<keyword id="KW-0677">Repeat</keyword>
<keyword id="KW-0808">Transferase</keyword>
<keyword id="KW-0833">Ubl conjugation pathway</keyword>
<keyword id="KW-0862">Zinc</keyword>
<keyword id="KW-0863">Zinc-finger</keyword>
<sequence length="488" mass="56864">MASKILLNVQEEVTCPICLELLTEPLSLDCGHSLCRACITVSNKEAVTSMGGKSSCPVCGISYSFEHLQANQHLANIVERLKEVKLSPDNGKKRDLCDHHGEKLLLFCKEDRKVICWLCERSQEHRGHHTVLTEEVFKECQEKLQAVLKRLKKEEEEAEKLEADIREEKTSWKYQVQTERQRIQTEFDQLRSILNNEEQRELQRLEEEEKKTLDKFAEAEDELVQQKQLVRELISDVECRSQWSTMELLQDMSGIMKWSEIWRLKKPKMVSKKLKTVFHAPDLSRMLQMFRELTAVRCYWVDVTLNSVNLNLNLVLSEDQRQVISVPIWPFQCYNYGVLGSQYFSSGKHYWEVDVSKKTAWILGVYCRTYSRHMKYVVRRCANRQNLYTKYRPLFGYWVIGLQNKCKYGVFEESLSSDPEVLTLSMAVPPCRVGVFLDYEAGIVSFFNVTSHGSLIYKFSKCCFSQPVYPYFNPWNCPAPMTLCPPSS</sequence>
<gene>
    <name type="primary">TRIM34</name>
    <name type="synonym">IFP1</name>
    <name type="synonym">RNF21</name>
</gene>
<comment type="function">
    <text evidence="6 8 9 10 11">Functions as antiviral protein and contributes to the defense against retroviral infections (PubMed:17156811, PubMed:32282853). Acts as a capsid-specific restriction factor with the help of TRIM5 and prevents infection from non-host-adapted retroviruses (PubMed:32282853). During influenza A virus infection, promotes programmed cell death by targeting ZBP1 for 'Lys-63'-linked polyubiquitination (PubMed:35065966). In turn, promotes ZBP1 recruitment of RIPK3 to mediate virus-induced programmed necrosis (PubMed:35065966). Negatively regulates the function of mitochondria by enhancing mitochondrial depolarization leading to cytochrome c release and mitochondria-dependent apoptosis (PubMed:31956709). Also promotes the formation of multinucleated giant cells by means of cell fusion and phagocytosis in epithelial cells (PubMed:31487507).</text>
</comment>
<comment type="catalytic activity">
    <reaction evidence="14">
        <text>S-ubiquitinyl-[E2 ubiquitin-conjugating enzyme]-L-cysteine + [acceptor protein]-L-lysine = [E2 ubiquitin-conjugating enzyme]-L-cysteine + N(6)-ubiquitinyl-[acceptor protein]-L-lysine.</text>
        <dbReference type="EC" id="2.3.2.27"/>
    </reaction>
</comment>
<comment type="pathway">
    <text>Protein modification; protein ubiquitination.</text>
</comment>
<comment type="subunit">
    <text evidence="6 7">Homotrimer. Interacts (via B-box and SPRY domain) with TRIM5 (PubMed:17156811, PubMed:21680743).</text>
</comment>
<comment type="subunit">
    <text evidence="6">(Microbial infection) Interacts (via the B30.2/SPRY domain) with HIV-1 capsid complexes (PubMed:17156811).</text>
</comment>
<comment type="subcellular location">
    <subcellularLocation>
        <location evidence="6 8 10">Cytoplasm</location>
    </subcellularLocation>
    <subcellularLocation>
        <location evidence="9">Mitochondrion</location>
    </subcellularLocation>
    <text evidence="10">Localizes in cytoplasmic bodies together with TRIM5 and incoming HIV-1 capsids during infection.</text>
</comment>
<comment type="alternative products">
    <event type="alternative splicing"/>
    <isoform>
        <id>Q9BYJ4-1</id>
        <name>1</name>
        <name>Medium</name>
        <sequence type="displayed"/>
    </isoform>
    <isoform>
        <id>Q9BYJ4-2</id>
        <name>2</name>
        <name>Short</name>
        <sequence type="described" ref="VSP_011921 VSP_011922"/>
    </isoform>
</comment>
<comment type="tissue specificity">
    <molecule>Isoform 1</molecule>
    <text evidence="5">Is the most abundant form. It is highly expressed in the placenta, spleen, colon and peripheral blood leukocytes.</text>
</comment>
<comment type="induction">
    <molecule>Isoform 1</molecule>
    <text evidence="5">Up-regulated by interferons.</text>
</comment>
<comment type="similarity">
    <text evidence="13">Belongs to the TRIM/RBCC family.</text>
</comment>
<comment type="sequence caution" evidence="13">
    <conflict type="erroneous initiation">
        <sequence resource="EMBL-CDS" id="AAG53517"/>
    </conflict>
</comment>
<comment type="sequence caution" evidence="13">
    <conflict type="miscellaneous discrepancy">
        <sequence resource="EMBL-CDS" id="BAB17050"/>
    </conflict>
    <text>The in vivo relevance of this transcript of the TRIM6 (AC Q9C030) and TRIM34 genes creating a chimeric protein of 842 residues is uncertain.</text>
</comment>
<feature type="chain" id="PRO_0000056248" description="E3 ubiquitin-protein ligase TRIM34">
    <location>
        <begin position="1"/>
        <end position="488"/>
    </location>
</feature>
<feature type="domain" description="B30.2/SPRY" evidence="4">
    <location>
        <begin position="283"/>
        <end position="488"/>
    </location>
</feature>
<feature type="zinc finger region" description="RING-type" evidence="3">
    <location>
        <begin position="15"/>
        <end position="60"/>
    </location>
</feature>
<feature type="zinc finger region" description="B box-type" evidence="2">
    <location>
        <begin position="92"/>
        <end position="134"/>
    </location>
</feature>
<feature type="coiled-coil region" evidence="1">
    <location>
        <begin position="131"/>
        <end position="239"/>
    </location>
</feature>
<feature type="binding site" evidence="2">
    <location>
        <position position="97"/>
    </location>
    <ligand>
        <name>Zn(2+)</name>
        <dbReference type="ChEBI" id="CHEBI:29105"/>
    </ligand>
</feature>
<feature type="binding site" evidence="2">
    <location>
        <position position="100"/>
    </location>
    <ligand>
        <name>Zn(2+)</name>
        <dbReference type="ChEBI" id="CHEBI:29105"/>
    </ligand>
</feature>
<feature type="binding site" evidence="2">
    <location>
        <position position="119"/>
    </location>
    <ligand>
        <name>Zn(2+)</name>
        <dbReference type="ChEBI" id="CHEBI:29105"/>
    </ligand>
</feature>
<feature type="binding site" evidence="2">
    <location>
        <position position="125"/>
    </location>
    <ligand>
        <name>Zn(2+)</name>
        <dbReference type="ChEBI" id="CHEBI:29105"/>
    </ligand>
</feature>
<feature type="splice variant" id="VSP_011921" description="In isoform 2." evidence="12">
    <original>SEIWRLKKPKMV</original>
    <variation>CVWVATSGACEL</variation>
    <location>
        <begin position="259"/>
        <end position="270"/>
    </location>
</feature>
<feature type="splice variant" id="VSP_011922" description="In isoform 2." evidence="12">
    <location>
        <begin position="271"/>
        <end position="488"/>
    </location>
</feature>
<feature type="sequence variant" id="VAR_019825" description="In dbSNP:rs6578670.">
    <original>T</original>
    <variation>S</variation>
    <location>
        <position position="276"/>
    </location>
</feature>
<feature type="sequence variant" id="VAR_019826" description="In dbSNP:rs3740997.">
    <original>D</original>
    <variation>H</variation>
    <location>
        <position position="282"/>
    </location>
</feature>
<feature type="sequence variant" id="VAR_052141" description="In dbSNP:rs16933844.">
    <original>N</original>
    <variation>K</variation>
    <location>
        <position position="404"/>
    </location>
</feature>
<feature type="mutagenesis site" description="Reduced association with TRIM5." evidence="7">
    <original>R</original>
    <variation>E</variation>
    <location>
        <position position="121"/>
    </location>
</feature>
<feature type="sequence conflict" description="In Ref. 5." evidence="13" ref="5">
    <original>H</original>
    <variation>Y</variation>
    <location>
        <position position="349"/>
    </location>
</feature>
<feature type="turn" evidence="15">
    <location>
        <begin position="16"/>
        <end position="19"/>
    </location>
</feature>
<feature type="strand" evidence="15">
    <location>
        <begin position="29"/>
        <end position="31"/>
    </location>
</feature>
<feature type="helix" evidence="15">
    <location>
        <begin position="36"/>
        <end position="39"/>
    </location>
</feature>
<feature type="strand" evidence="15">
    <location>
        <begin position="47"/>
        <end position="49"/>
    </location>
</feature>
<feature type="strand" evidence="15">
    <location>
        <begin position="57"/>
        <end position="59"/>
    </location>
</feature>
<feature type="helix" evidence="15">
    <location>
        <begin position="67"/>
        <end position="69"/>
    </location>
</feature>
<feature type="strand" evidence="15">
    <location>
        <begin position="72"/>
        <end position="74"/>
    </location>
</feature>
<accession>Q9BYJ4</accession>
<accession>D3DQS7</accession>
<accession>Q9C016</accession>
<accession>Q9HCR0</accession>
<accession>Q9HCR1</accession>
<accession>Q9HCR2</accession>
<name>TRI34_HUMAN</name>
<evidence type="ECO:0000255" key="1"/>
<evidence type="ECO:0000255" key="2">
    <source>
        <dbReference type="PROSITE-ProRule" id="PRU00024"/>
    </source>
</evidence>
<evidence type="ECO:0000255" key="3">
    <source>
        <dbReference type="PROSITE-ProRule" id="PRU00175"/>
    </source>
</evidence>
<evidence type="ECO:0000255" key="4">
    <source>
        <dbReference type="PROSITE-ProRule" id="PRU00548"/>
    </source>
</evidence>
<evidence type="ECO:0000269" key="5">
    <source>
    </source>
</evidence>
<evidence type="ECO:0000269" key="6">
    <source>
    </source>
</evidence>
<evidence type="ECO:0000269" key="7">
    <source>
    </source>
</evidence>
<evidence type="ECO:0000269" key="8">
    <source>
    </source>
</evidence>
<evidence type="ECO:0000269" key="9">
    <source>
    </source>
</evidence>
<evidence type="ECO:0000269" key="10">
    <source>
    </source>
</evidence>
<evidence type="ECO:0000269" key="11">
    <source>
    </source>
</evidence>
<evidence type="ECO:0000303" key="12">
    <source>
    </source>
</evidence>
<evidence type="ECO:0000305" key="13"/>
<evidence type="ECO:0000305" key="14">
    <source>
    </source>
</evidence>
<evidence type="ECO:0007829" key="15">
    <source>
        <dbReference type="PDB" id="2EGP"/>
    </source>
</evidence>